<proteinExistence type="evidence at protein level"/>
<name>OSTP_RAT</name>
<keyword id="KW-0091">Biomineralization</keyword>
<keyword id="KW-0130">Cell adhesion</keyword>
<keyword id="KW-0202">Cytokine</keyword>
<keyword id="KW-0903">Direct protein sequencing</keyword>
<keyword id="KW-0325">Glycoprotein</keyword>
<keyword id="KW-0597">Phosphoprotein</keyword>
<keyword id="KW-0654">Proteoglycan</keyword>
<keyword id="KW-1185">Reference proteome</keyword>
<keyword id="KW-0964">Secreted</keyword>
<keyword id="KW-0730">Sialic acid</keyword>
<keyword id="KW-0732">Signal</keyword>
<protein>
    <recommendedName>
        <fullName>Osteopontin</fullName>
    </recommendedName>
    <alternativeName>
        <fullName>Bone sialoprotein 1</fullName>
    </alternativeName>
    <alternativeName>
        <fullName>Secreted phosphoprotein 1</fullName>
        <shortName>SPP-1</shortName>
    </alternativeName>
</protein>
<accession>P08721</accession>
<sequence>MRLAVVCFCLFGLASCLPVKVAEFGSSEEKAHYSKHSDAVATWLKPDPSQKQNLLAPQNSVSSEETDDFKQETLPSNSNESHDHMDDDDDDDDDGDHAESEDSVNSDESDESHHSDESDESFTASTQADVLTPIAPTVDVPDGRGDSLAYGLRSKSRSFPVSDEQYPDATDEDLTSRMKSQESDEAIKVIPVAQRLSVPSDQDSNGKTSHESSQLDEPSVETHSLEQSKEYKQRASHESTEQSDAIDSAEKPDAIDSAERSDAIDSQASSKASLEHQSHEFHSHEDKLVLDPKSKEDDRYLKFRISHELESSSSEVN</sequence>
<evidence type="ECO:0000250" key="1"/>
<evidence type="ECO:0000250" key="2">
    <source>
        <dbReference type="UniProtKB" id="P10451"/>
    </source>
</evidence>
<evidence type="ECO:0000250" key="3">
    <source>
        <dbReference type="UniProtKB" id="P10923"/>
    </source>
</evidence>
<evidence type="ECO:0000250" key="4">
    <source>
        <dbReference type="UniProtKB" id="P31096"/>
    </source>
</evidence>
<evidence type="ECO:0000256" key="5">
    <source>
        <dbReference type="SAM" id="MobiDB-lite"/>
    </source>
</evidence>
<evidence type="ECO:0000269" key="6">
    <source>
    </source>
</evidence>
<evidence type="ECO:0000269" key="7">
    <source>
    </source>
</evidence>
<evidence type="ECO:0000269" key="8">
    <source>
    </source>
</evidence>
<evidence type="ECO:0000305" key="9"/>
<evidence type="ECO:0007744" key="10">
    <source>
    </source>
</evidence>
<dbReference type="EMBL" id="M99252">
    <property type="protein sequence ID" value="AAA41765.1"/>
    <property type="molecule type" value="mRNA"/>
</dbReference>
<dbReference type="EMBL" id="M14656">
    <property type="protein sequence ID" value="AAA41762.1"/>
    <property type="molecule type" value="mRNA"/>
</dbReference>
<dbReference type="EMBL" id="BC078874">
    <property type="protein sequence ID" value="AAH78874.1"/>
    <property type="molecule type" value="mRNA"/>
</dbReference>
<dbReference type="PIR" id="A25917">
    <property type="entry name" value="A25917"/>
</dbReference>
<dbReference type="PIR" id="JC5811">
    <property type="entry name" value="JC5811"/>
</dbReference>
<dbReference type="RefSeq" id="NP_037013.2">
    <property type="nucleotide sequence ID" value="NM_012881.2"/>
</dbReference>
<dbReference type="RefSeq" id="XP_008768218.1">
    <property type="nucleotide sequence ID" value="XM_008769996.3"/>
</dbReference>
<dbReference type="RefSeq" id="XP_063128940.1">
    <property type="nucleotide sequence ID" value="XM_063272870.1"/>
</dbReference>
<dbReference type="BioGRID" id="247392">
    <property type="interactions" value="4"/>
</dbReference>
<dbReference type="ELM" id="P08721"/>
<dbReference type="FunCoup" id="P08721">
    <property type="interactions" value="282"/>
</dbReference>
<dbReference type="IntAct" id="P08721">
    <property type="interactions" value="2"/>
</dbReference>
<dbReference type="MINT" id="P08721"/>
<dbReference type="STRING" id="10116.ENSRNOP00000062358"/>
<dbReference type="GlyCosmos" id="P08721">
    <property type="glycosylation" value="3 sites, No reported glycans"/>
</dbReference>
<dbReference type="GlyGen" id="P08721">
    <property type="glycosylation" value="10 sites"/>
</dbReference>
<dbReference type="iPTMnet" id="P08721"/>
<dbReference type="PhosphoSitePlus" id="P08721"/>
<dbReference type="PaxDb" id="10116-ENSRNOP00000062358"/>
<dbReference type="Ensembl" id="ENSRNOT00000067875.5">
    <property type="protein sequence ID" value="ENSRNOP00000062358.2"/>
    <property type="gene ID" value="ENSRNOG00000043451.5"/>
</dbReference>
<dbReference type="GeneID" id="25353"/>
<dbReference type="KEGG" id="rno:25353"/>
<dbReference type="AGR" id="RGD:3752"/>
<dbReference type="CTD" id="6696"/>
<dbReference type="RGD" id="3752">
    <property type="gene designation" value="Spp1"/>
</dbReference>
<dbReference type="eggNOG" id="ENOG502S5R4">
    <property type="taxonomic scope" value="Eukaryota"/>
</dbReference>
<dbReference type="GeneTree" id="ENSGT00390000002509"/>
<dbReference type="HOGENOM" id="CLU_953033_0_0_1"/>
<dbReference type="InParanoid" id="P08721"/>
<dbReference type="OMA" id="HSAEDHH"/>
<dbReference type="OrthoDB" id="91160at9989"/>
<dbReference type="PhylomeDB" id="P08721"/>
<dbReference type="Reactome" id="R-RNO-1474228">
    <property type="pathway name" value="Degradation of the extracellular matrix"/>
</dbReference>
<dbReference type="Reactome" id="R-RNO-186797">
    <property type="pathway name" value="Signaling by PDGF"/>
</dbReference>
<dbReference type="Reactome" id="R-RNO-216083">
    <property type="pathway name" value="Integrin cell surface interactions"/>
</dbReference>
<dbReference type="Reactome" id="R-RNO-381426">
    <property type="pathway name" value="Regulation of Insulin-like Growth Factor (IGF) transport and uptake by Insulin-like Growth Factor Binding Proteins (IGFBPs)"/>
</dbReference>
<dbReference type="Reactome" id="R-RNO-8957275">
    <property type="pathway name" value="Post-translational protein phosphorylation"/>
</dbReference>
<dbReference type="PRO" id="PR:P08721"/>
<dbReference type="Proteomes" id="UP000002494">
    <property type="component" value="Chromosome 14"/>
</dbReference>
<dbReference type="Bgee" id="ENSRNOG00000043451">
    <property type="expression patterns" value="Expressed in kidney and 18 other cell types or tissues"/>
</dbReference>
<dbReference type="GO" id="GO:0045177">
    <property type="term" value="C:apical part of cell"/>
    <property type="evidence" value="ECO:0000266"/>
    <property type="project" value="RGD"/>
</dbReference>
<dbReference type="GO" id="GO:0042995">
    <property type="term" value="C:cell projection"/>
    <property type="evidence" value="ECO:0000314"/>
    <property type="project" value="RGD"/>
</dbReference>
<dbReference type="GO" id="GO:0005737">
    <property type="term" value="C:cytoplasm"/>
    <property type="evidence" value="ECO:0000266"/>
    <property type="project" value="RGD"/>
</dbReference>
<dbReference type="GO" id="GO:0005615">
    <property type="term" value="C:extracellular space"/>
    <property type="evidence" value="ECO:0000314"/>
    <property type="project" value="RGD"/>
</dbReference>
<dbReference type="GO" id="GO:0005794">
    <property type="term" value="C:Golgi apparatus"/>
    <property type="evidence" value="ECO:0007669"/>
    <property type="project" value="Ensembl"/>
</dbReference>
<dbReference type="GO" id="GO:0048471">
    <property type="term" value="C:perinuclear region of cytoplasm"/>
    <property type="evidence" value="ECO:0000314"/>
    <property type="project" value="RGD"/>
</dbReference>
<dbReference type="GO" id="GO:0031982">
    <property type="term" value="C:vesicle"/>
    <property type="evidence" value="ECO:0000314"/>
    <property type="project" value="RGD"/>
</dbReference>
<dbReference type="GO" id="GO:0005125">
    <property type="term" value="F:cytokine activity"/>
    <property type="evidence" value="ECO:0007669"/>
    <property type="project" value="UniProtKB-KW"/>
</dbReference>
<dbReference type="GO" id="GO:0050840">
    <property type="term" value="F:extracellular matrix binding"/>
    <property type="evidence" value="ECO:0000266"/>
    <property type="project" value="RGD"/>
</dbReference>
<dbReference type="GO" id="GO:0005178">
    <property type="term" value="F:integrin binding"/>
    <property type="evidence" value="ECO:0000250"/>
    <property type="project" value="UniProtKB"/>
</dbReference>
<dbReference type="GO" id="GO:0036094">
    <property type="term" value="F:small molecule binding"/>
    <property type="evidence" value="ECO:0000266"/>
    <property type="project" value="RGD"/>
</dbReference>
<dbReference type="GO" id="GO:0006710">
    <property type="term" value="P:androgen catabolic process"/>
    <property type="evidence" value="ECO:0000266"/>
    <property type="project" value="RGD"/>
</dbReference>
<dbReference type="GO" id="GO:0030282">
    <property type="term" value="P:bone mineralization"/>
    <property type="evidence" value="ECO:0000266"/>
    <property type="project" value="RGD"/>
</dbReference>
<dbReference type="GO" id="GO:0055074">
    <property type="term" value="P:calcium ion homeostasis"/>
    <property type="evidence" value="ECO:0000266"/>
    <property type="project" value="RGD"/>
</dbReference>
<dbReference type="GO" id="GO:0007155">
    <property type="term" value="P:cell adhesion"/>
    <property type="evidence" value="ECO:0000314"/>
    <property type="project" value="RGD"/>
</dbReference>
<dbReference type="GO" id="GO:0030154">
    <property type="term" value="P:cell differentiation"/>
    <property type="evidence" value="ECO:0000270"/>
    <property type="project" value="RGD"/>
</dbReference>
<dbReference type="GO" id="GO:0071498">
    <property type="term" value="P:cellular response to fluid shear stress"/>
    <property type="evidence" value="ECO:0000266"/>
    <property type="project" value="RGD"/>
</dbReference>
<dbReference type="GO" id="GO:1990830">
    <property type="term" value="P:cellular response to leukemia inhibitory factor"/>
    <property type="evidence" value="ECO:0000266"/>
    <property type="project" value="RGD"/>
</dbReference>
<dbReference type="GO" id="GO:0071394">
    <property type="term" value="P:cellular response to testosterone stimulus"/>
    <property type="evidence" value="ECO:0000266"/>
    <property type="project" value="RGD"/>
</dbReference>
<dbReference type="GO" id="GO:0072044">
    <property type="term" value="P:collecting duct development"/>
    <property type="evidence" value="ECO:0000266"/>
    <property type="project" value="RGD"/>
</dbReference>
<dbReference type="GO" id="GO:0006874">
    <property type="term" value="P:intracellular calcium ion homeostasis"/>
    <property type="evidence" value="ECO:0000266"/>
    <property type="project" value="RGD"/>
</dbReference>
<dbReference type="GO" id="GO:0030644">
    <property type="term" value="P:intracellular chloride ion homeostasis"/>
    <property type="evidence" value="ECO:0000266"/>
    <property type="project" value="RGD"/>
</dbReference>
<dbReference type="GO" id="GO:0030643">
    <property type="term" value="P:intracellular phosphate ion homeostasis"/>
    <property type="evidence" value="ECO:0000266"/>
    <property type="project" value="RGD"/>
</dbReference>
<dbReference type="GO" id="GO:0006883">
    <property type="term" value="P:intracellular sodium ion homeostasis"/>
    <property type="evidence" value="ECO:0000266"/>
    <property type="project" value="RGD"/>
</dbReference>
<dbReference type="GO" id="GO:0048685">
    <property type="term" value="P:negative regulation of collateral sprouting of intact axon in response to injury"/>
    <property type="evidence" value="ECO:0000270"/>
    <property type="project" value="RGD"/>
</dbReference>
<dbReference type="GO" id="GO:0030593">
    <property type="term" value="P:neutrophil chemotaxis"/>
    <property type="evidence" value="ECO:0000266"/>
    <property type="project" value="RGD"/>
</dbReference>
<dbReference type="GO" id="GO:0001649">
    <property type="term" value="P:osteoblast differentiation"/>
    <property type="evidence" value="ECO:0000315"/>
    <property type="project" value="RGD"/>
</dbReference>
<dbReference type="GO" id="GO:0045780">
    <property type="term" value="P:positive regulation of bone resorption"/>
    <property type="evidence" value="ECO:0000314"/>
    <property type="project" value="RGD"/>
</dbReference>
<dbReference type="GO" id="GO:0010811">
    <property type="term" value="P:positive regulation of cell-substrate adhesion"/>
    <property type="evidence" value="ECO:0000266"/>
    <property type="project" value="RGD"/>
</dbReference>
<dbReference type="GO" id="GO:0045893">
    <property type="term" value="P:positive regulation of DNA-templated transcription"/>
    <property type="evidence" value="ECO:0000266"/>
    <property type="project" value="RGD"/>
</dbReference>
<dbReference type="GO" id="GO:2000866">
    <property type="term" value="P:positive regulation of estradiol secretion"/>
    <property type="evidence" value="ECO:0000266"/>
    <property type="project" value="RGD"/>
</dbReference>
<dbReference type="GO" id="GO:1904612">
    <property type="term" value="P:response to 2,3,7,8-tetrachlorodibenzodioxine"/>
    <property type="evidence" value="ECO:0000314"/>
    <property type="project" value="RGD"/>
</dbReference>
<dbReference type="GO" id="GO:0036005">
    <property type="term" value="P:response to macrophage colony-stimulating factor"/>
    <property type="evidence" value="ECO:0000270"/>
    <property type="project" value="RGD"/>
</dbReference>
<dbReference type="GO" id="GO:0048545">
    <property type="term" value="P:response to steroid hormone"/>
    <property type="evidence" value="ECO:0000314"/>
    <property type="project" value="RGD"/>
</dbReference>
<dbReference type="GO" id="GO:0033280">
    <property type="term" value="P:response to vitamin D"/>
    <property type="evidence" value="ECO:0000266"/>
    <property type="project" value="RGD"/>
</dbReference>
<dbReference type="GO" id="GO:0034418">
    <property type="term" value="P:urate biosynthetic process"/>
    <property type="evidence" value="ECO:0000266"/>
    <property type="project" value="RGD"/>
</dbReference>
<dbReference type="InterPro" id="IPR002038">
    <property type="entry name" value="Osteopontin"/>
</dbReference>
<dbReference type="InterPro" id="IPR019841">
    <property type="entry name" value="Osteopontin_CS"/>
</dbReference>
<dbReference type="PANTHER" id="PTHR10607">
    <property type="entry name" value="OSTEOPONTIN"/>
    <property type="match status" value="1"/>
</dbReference>
<dbReference type="PANTHER" id="PTHR10607:SF1">
    <property type="entry name" value="OSTEOPONTIN"/>
    <property type="match status" value="1"/>
</dbReference>
<dbReference type="Pfam" id="PF00865">
    <property type="entry name" value="Osteopontin"/>
    <property type="match status" value="2"/>
</dbReference>
<dbReference type="PRINTS" id="PR00216">
    <property type="entry name" value="OSTEOPONTIN"/>
</dbReference>
<dbReference type="SMART" id="SM00017">
    <property type="entry name" value="OSTEO"/>
    <property type="match status" value="1"/>
</dbReference>
<dbReference type="PROSITE" id="PS00884">
    <property type="entry name" value="OSTEOPONTIN"/>
    <property type="match status" value="1"/>
</dbReference>
<feature type="signal peptide" evidence="6 7 8">
    <location>
        <begin position="1"/>
        <end position="16"/>
    </location>
</feature>
<feature type="chain" id="PRO_0000020325" description="Osteopontin">
    <location>
        <begin position="17"/>
        <end position="317"/>
    </location>
</feature>
<feature type="region of interest" description="Disordered" evidence="5">
    <location>
        <begin position="43"/>
        <end position="297"/>
    </location>
</feature>
<feature type="short sequence motif" description="Cell attachment site">
    <location>
        <begin position="144"/>
        <end position="146"/>
    </location>
</feature>
<feature type="compositionally biased region" description="Polar residues" evidence="5">
    <location>
        <begin position="49"/>
        <end position="63"/>
    </location>
</feature>
<feature type="compositionally biased region" description="Acidic residues" evidence="5">
    <location>
        <begin position="86"/>
        <end position="110"/>
    </location>
</feature>
<feature type="compositionally biased region" description="Basic and acidic residues" evidence="5">
    <location>
        <begin position="174"/>
        <end position="187"/>
    </location>
</feature>
<feature type="compositionally biased region" description="Polar residues" evidence="5">
    <location>
        <begin position="197"/>
        <end position="216"/>
    </location>
</feature>
<feature type="compositionally biased region" description="Basic and acidic residues" evidence="5">
    <location>
        <begin position="223"/>
        <end position="240"/>
    </location>
</feature>
<feature type="compositionally biased region" description="Basic and acidic residues" evidence="5">
    <location>
        <begin position="248"/>
        <end position="263"/>
    </location>
</feature>
<feature type="compositionally biased region" description="Basic and acidic residues" evidence="5">
    <location>
        <begin position="273"/>
        <end position="297"/>
    </location>
</feature>
<feature type="modified residue" description="Phosphoserine" evidence="2">
    <location>
        <position position="26"/>
    </location>
</feature>
<feature type="modified residue" description="Phosphoserine" evidence="2">
    <location>
        <position position="27"/>
    </location>
</feature>
<feature type="modified residue" description="Phosphoserine" evidence="4">
    <location>
        <position position="60"/>
    </location>
</feature>
<feature type="modified residue" description="Phosphoserine" evidence="10">
    <location>
        <position position="62"/>
    </location>
</feature>
<feature type="modified residue" description="Phosphoserine" evidence="10">
    <location>
        <position position="63"/>
    </location>
</feature>
<feature type="modified residue" description="Phosphothreonine" evidence="2">
    <location>
        <position position="66"/>
    </location>
</feature>
<feature type="modified residue" description="Phosphoserine" evidence="4">
    <location>
        <position position="76"/>
    </location>
</feature>
<feature type="modified residue" description="Phosphoserine" evidence="4">
    <location>
        <position position="78"/>
    </location>
</feature>
<feature type="modified residue" description="Phosphoserine" evidence="4">
    <location>
        <position position="81"/>
    </location>
</feature>
<feature type="modified residue" description="Phosphoserine" evidence="2">
    <location>
        <position position="106"/>
    </location>
</feature>
<feature type="modified residue" description="Phosphoserine" evidence="4">
    <location>
        <position position="109"/>
    </location>
</feature>
<feature type="modified residue" description="Phosphoserine" evidence="2">
    <location>
        <position position="112"/>
    </location>
</feature>
<feature type="modified residue" description="Phosphoserine" evidence="4">
    <location>
        <position position="115"/>
    </location>
</feature>
<feature type="modified residue" description="Phosphoserine" evidence="4">
    <location>
        <position position="118"/>
    </location>
</feature>
<feature type="modified residue" description="Phosphothreonine" evidence="4">
    <location>
        <position position="170"/>
    </location>
</feature>
<feature type="modified residue" description="Phosphothreonine" evidence="2">
    <location>
        <position position="175"/>
    </location>
</feature>
<feature type="modified residue" description="Phosphoserine" evidence="2">
    <location>
        <position position="176"/>
    </location>
</feature>
<feature type="modified residue" description="Phosphoserine" evidence="2">
    <location>
        <position position="180"/>
    </location>
</feature>
<feature type="modified residue" description="Phosphoserine" evidence="2">
    <location>
        <position position="200"/>
    </location>
</feature>
<feature type="modified residue" description="Phosphoserine" evidence="2">
    <location>
        <position position="204"/>
    </location>
</feature>
<feature type="modified residue" description="Phosphoserine" evidence="2">
    <location>
        <position position="209"/>
    </location>
</feature>
<feature type="modified residue" description="Phosphoserine" evidence="2">
    <location>
        <position position="213"/>
    </location>
</feature>
<feature type="modified residue" description="Phosphoserine" evidence="2">
    <location>
        <position position="219"/>
    </location>
</feature>
<feature type="modified residue" description="Phosphothreonine" evidence="2">
    <location>
        <position position="222"/>
    </location>
</feature>
<feature type="modified residue" description="Phosphoserine" evidence="2">
    <location>
        <position position="224"/>
    </location>
</feature>
<feature type="modified residue" description="Phosphoserine" evidence="2">
    <location>
        <position position="228"/>
    </location>
</feature>
<feature type="modified residue" description="Phosphoserine" evidence="2">
    <location>
        <position position="257"/>
    </location>
</feature>
<feature type="modified residue" description="Phosphoserine" evidence="2">
    <location>
        <position position="261"/>
    </location>
</feature>
<feature type="modified residue" description="Phosphoserine" evidence="2">
    <location>
        <position position="266"/>
    </location>
</feature>
<feature type="modified residue" description="Phosphoserine" evidence="2">
    <location>
        <position position="270"/>
    </location>
</feature>
<feature type="modified residue" description="Phosphoserine" evidence="2">
    <location>
        <position position="273"/>
    </location>
</feature>
<feature type="modified residue" description="Phosphoserine" evidence="2">
    <location>
        <position position="278"/>
    </location>
</feature>
<feature type="modified residue" description="Phosphoserine" evidence="2">
    <location>
        <position position="283"/>
    </location>
</feature>
<feature type="modified residue" description="Phosphoserine" evidence="2">
    <location>
        <position position="294"/>
    </location>
</feature>
<feature type="modified residue" description="Phosphoserine" evidence="2">
    <location>
        <position position="306"/>
    </location>
</feature>
<feature type="modified residue" description="Phosphoserine" evidence="2">
    <location>
        <position position="311"/>
    </location>
</feature>
<feature type="modified residue" description="Phosphoserine" evidence="2">
    <location>
        <position position="313"/>
    </location>
</feature>
<feature type="modified residue" description="Phosphoserine" evidence="2">
    <location>
        <position position="314"/>
    </location>
</feature>
<feature type="glycosylation site" description="O-linked (GalNAc...) threonine" evidence="1">
    <location>
        <position position="123"/>
    </location>
</feature>
<feature type="glycosylation site" description="O-linked (GalNAc...) threonine" evidence="1">
    <location>
        <position position="132"/>
    </location>
</feature>
<feature type="glycosylation site" description="O-linked (GalNAc...) threonine" evidence="1">
    <location>
        <position position="137"/>
    </location>
</feature>
<feature type="glycosylation site" description="O-linked (Xyl...) (chondroitin sulfate) serine" evidence="2">
    <location>
        <position position="219"/>
    </location>
</feature>
<feature type="glycosylation site" description="O-linked (Xyl...) (chondroitin sulfate) serine" evidence="2">
    <location>
        <position position="311"/>
    </location>
</feature>
<feature type="sequence conflict" description="In Ref. 2; AAA41762." evidence="9" ref="2">
    <original>F</original>
    <variation>L</variation>
    <location>
        <position position="8"/>
    </location>
</feature>
<comment type="function">
    <text evidence="4">Major non-collagenous bone protein that binds tightly to hydroxyapatite. Appears to form an integral part of the mineralized matrix. Probably important to cell-matrix interaction.</text>
</comment>
<comment type="function">
    <text evidence="3">Acts as a cytokine involved in enhancing production of interferon-gamma and interleukin-12 and reducing production of interleukin-10 and is essential in the pathway that leads to type I immunity.</text>
</comment>
<comment type="subunit">
    <text evidence="3">Interacts (via N-terminus) with integrin ITGA9:ITGB1.</text>
</comment>
<comment type="subcellular location">
    <subcellularLocation>
        <location evidence="2">Secreted</location>
    </subcellularLocation>
</comment>
<comment type="PTM">
    <text evidence="2 3">Extensively phosphorylated by FAM20C in the extracellular medium at multiple sites within the S-x-E/pS motif (By similarity). The phosphorylated form inhibits hydroxyapatite crystallization. Dephosphorylation via a mechanism involving ALPL/TNAP promotes hydroxyapatite crystallization (By similarity).</text>
</comment>
<comment type="PTM">
    <text evidence="2">O-glycosylated.</text>
</comment>
<comment type="PTM">
    <text evidence="4">Forms covalent cross-links mediated by transglutaminase TGM2, between a glutamine and the epsilon-amino group of a lysine residue, forming homopolymers and heteropolymers, increasing its collagen binding properties.</text>
</comment>
<comment type="similarity">
    <text evidence="9">Belongs to the osteopontin family.</text>
</comment>
<organism>
    <name type="scientific">Rattus norvegicus</name>
    <name type="common">Rat</name>
    <dbReference type="NCBI Taxonomy" id="10116"/>
    <lineage>
        <taxon>Eukaryota</taxon>
        <taxon>Metazoa</taxon>
        <taxon>Chordata</taxon>
        <taxon>Craniata</taxon>
        <taxon>Vertebrata</taxon>
        <taxon>Euteleostomi</taxon>
        <taxon>Mammalia</taxon>
        <taxon>Eutheria</taxon>
        <taxon>Euarchontoglires</taxon>
        <taxon>Glires</taxon>
        <taxon>Rodentia</taxon>
        <taxon>Myomorpha</taxon>
        <taxon>Muroidea</taxon>
        <taxon>Muridae</taxon>
        <taxon>Murinae</taxon>
        <taxon>Rattus</taxon>
    </lineage>
</organism>
<reference key="1">
    <citation type="journal article" date="1992" name="J. Biol. Chem.">
        <title>Differential processing of osteopontin transcripts in rat kidney- and osteoblast-derived cell lines.</title>
        <authorList>
            <person name="Singh K."/>
            <person name="Mukherjee A.B."/>
            <person name="de Vouge M.W."/>
            <person name="Mukherjee B.B."/>
        </authorList>
    </citation>
    <scope>NUCLEOTIDE SEQUENCE [MRNA]</scope>
    <source>
        <tissue>Kidney</tissue>
    </source>
</reference>
<reference key="2">
    <citation type="journal article" date="1986" name="Proc. Natl. Acad. Sci. U.S.A.">
        <title>Cloning and sequence analysis of rat bone sialoprotein (osteopontin) cDNA reveals an Arg-Gly-Asp cell-binding sequence.</title>
        <authorList>
            <person name="Oldberg A."/>
            <person name="Franzen A."/>
            <person name="Heinegaard D."/>
        </authorList>
    </citation>
    <scope>NUCLEOTIDE SEQUENCE [MRNA]</scope>
</reference>
<reference key="3">
    <citation type="journal article" date="1993" name="J. Clin. Invest.">
        <title>Osteopontin is elevated during neointima formation in rat arteries and is a novel component of human atherosclerotic plaques.</title>
        <authorList>
            <person name="Giachelli C.M."/>
            <person name="Bae N."/>
            <person name="Almeida M."/>
            <person name="Denhardt D.T."/>
            <person name="Alpers C.E."/>
            <person name="Schwartz S.M."/>
        </authorList>
    </citation>
    <scope>NUCLEOTIDE SEQUENCE [MRNA]</scope>
    <source>
        <strain>Sprague-Dawley</strain>
        <tissue>Smooth muscle</tissue>
    </source>
</reference>
<reference key="4">
    <citation type="journal article" date="2004" name="Genome Res.">
        <title>The status, quality, and expansion of the NIH full-length cDNA project: the Mammalian Gene Collection (MGC).</title>
        <authorList>
            <consortium name="The MGC Project Team"/>
        </authorList>
    </citation>
    <scope>NUCLEOTIDE SEQUENCE [LARGE SCALE MRNA]</scope>
    <source>
        <tissue>Kidney</tissue>
    </source>
</reference>
<reference key="5">
    <citation type="journal article" date="1989" name="Biochim. Biophys. Acta">
        <title>Purification of a human milk protein closely similar to tumor-secreted phosphoproteins and osteopontin.</title>
        <authorList>
            <person name="Senger D.R."/>
            <person name="Perruzzi C.A."/>
            <person name="Papadopoulos A."/>
            <person name="Tenen D.G."/>
        </authorList>
    </citation>
    <scope>PROTEIN SEQUENCE OF 17-25 AND 154-167</scope>
</reference>
<reference key="6">
    <citation type="journal article" date="1987" name="J. Biol. Chem.">
        <title>Isolation, characterization, and biosynthesis of a phosphorylated glycoprotein from rat bone.</title>
        <authorList>
            <person name="Prince C.W."/>
            <person name="Oosawa T."/>
            <person name="Butler W.T."/>
            <person name="Tomana M."/>
            <person name="Bhown A.S."/>
            <person name="Bhown M."/>
            <person name="Schrohenloher R.E."/>
        </authorList>
    </citation>
    <scope>PROTEIN SEQUENCE OF 17-27</scope>
    <source>
        <tissue>Bone</tissue>
    </source>
</reference>
<reference key="7">
    <citation type="journal article" date="1988" name="Cancer Res.">
        <title>Secreted phosphoproteins associated with neoplastic transformation: close homology with plasma proteins cleaved during blood coagulation.</title>
        <authorList>
            <person name="Senger D.R."/>
            <person name="Perruzzi C.A."/>
            <person name="Gracey C.F."/>
            <person name="Papadopoulos A."/>
            <person name="Tenen D.G."/>
        </authorList>
    </citation>
    <scope>PROTEIN SEQUENCE OF 17-25</scope>
</reference>
<reference key="8">
    <citation type="journal article" date="2012" name="Nat. Commun.">
        <title>Quantitative maps of protein phosphorylation sites across 14 different rat organs and tissues.</title>
        <authorList>
            <person name="Lundby A."/>
            <person name="Secher A."/>
            <person name="Lage K."/>
            <person name="Nordsborg N.B."/>
            <person name="Dmytriyev A."/>
            <person name="Lundby C."/>
            <person name="Olsen J.V."/>
        </authorList>
    </citation>
    <scope>PHOSPHORYLATION [LARGE SCALE ANALYSIS] AT SER-62 AND SER-63</scope>
    <scope>IDENTIFICATION BY MASS SPECTROMETRY [LARGE SCALE ANALYSIS]</scope>
</reference>
<gene>
    <name type="primary">Spp1</name>
    <name type="synonym">2b7</name>
    <name type="synonym">Spp-1</name>
</gene>